<accession>Q87AR0</accession>
<feature type="chain" id="PRO_0000083092" description="Methionyl-tRNA formyltransferase">
    <location>
        <begin position="1"/>
        <end position="307"/>
    </location>
</feature>
<feature type="binding site" evidence="1">
    <location>
        <begin position="108"/>
        <end position="111"/>
    </location>
    <ligand>
        <name>(6S)-5,6,7,8-tetrahydrofolate</name>
        <dbReference type="ChEBI" id="CHEBI:57453"/>
    </ligand>
</feature>
<proteinExistence type="inferred from homology"/>
<comment type="function">
    <text evidence="1">Attaches a formyl group to the free amino group of methionyl-tRNA(fMet). The formyl group appears to play a dual role in the initiator identity of N-formylmethionyl-tRNA by promoting its recognition by IF2 and preventing the misappropriation of this tRNA by the elongation apparatus.</text>
</comment>
<comment type="catalytic activity">
    <reaction evidence="1">
        <text>L-methionyl-tRNA(fMet) + (6R)-10-formyltetrahydrofolate = N-formyl-L-methionyl-tRNA(fMet) + (6S)-5,6,7,8-tetrahydrofolate + H(+)</text>
        <dbReference type="Rhea" id="RHEA:24380"/>
        <dbReference type="Rhea" id="RHEA-COMP:9952"/>
        <dbReference type="Rhea" id="RHEA-COMP:9953"/>
        <dbReference type="ChEBI" id="CHEBI:15378"/>
        <dbReference type="ChEBI" id="CHEBI:57453"/>
        <dbReference type="ChEBI" id="CHEBI:78530"/>
        <dbReference type="ChEBI" id="CHEBI:78844"/>
        <dbReference type="ChEBI" id="CHEBI:195366"/>
        <dbReference type="EC" id="2.1.2.9"/>
    </reaction>
</comment>
<comment type="similarity">
    <text evidence="1">Belongs to the Fmt family.</text>
</comment>
<organism>
    <name type="scientific">Xylella fastidiosa (strain Temecula1 / ATCC 700964)</name>
    <dbReference type="NCBI Taxonomy" id="183190"/>
    <lineage>
        <taxon>Bacteria</taxon>
        <taxon>Pseudomonadati</taxon>
        <taxon>Pseudomonadota</taxon>
        <taxon>Gammaproteobacteria</taxon>
        <taxon>Lysobacterales</taxon>
        <taxon>Lysobacteraceae</taxon>
        <taxon>Xylella</taxon>
    </lineage>
</organism>
<reference key="1">
    <citation type="journal article" date="2003" name="J. Bacteriol.">
        <title>Comparative analyses of the complete genome sequences of Pierce's disease and citrus variegated chlorosis strains of Xylella fastidiosa.</title>
        <authorList>
            <person name="Van Sluys M.A."/>
            <person name="de Oliveira M.C."/>
            <person name="Monteiro-Vitorello C.B."/>
            <person name="Miyaki C.Y."/>
            <person name="Furlan L.R."/>
            <person name="Camargo L.E.A."/>
            <person name="da Silva A.C.R."/>
            <person name="Moon D.H."/>
            <person name="Takita M.A."/>
            <person name="Lemos E.G.M."/>
            <person name="Machado M.A."/>
            <person name="Ferro M.I.T."/>
            <person name="da Silva F.R."/>
            <person name="Goldman M.H.S."/>
            <person name="Goldman G.H."/>
            <person name="Lemos M.V.F."/>
            <person name="El-Dorry H."/>
            <person name="Tsai S.M."/>
            <person name="Carrer H."/>
            <person name="Carraro D.M."/>
            <person name="de Oliveira R.C."/>
            <person name="Nunes L.R."/>
            <person name="Siqueira W.J."/>
            <person name="Coutinho L.L."/>
            <person name="Kimura E.T."/>
            <person name="Ferro E.S."/>
            <person name="Harakava R."/>
            <person name="Kuramae E.E."/>
            <person name="Marino C.L."/>
            <person name="Giglioti E."/>
            <person name="Abreu I.L."/>
            <person name="Alves L.M.C."/>
            <person name="do Amaral A.M."/>
            <person name="Baia G.S."/>
            <person name="Blanco S.R."/>
            <person name="Brito M.S."/>
            <person name="Cannavan F.S."/>
            <person name="Celestino A.V."/>
            <person name="da Cunha A.F."/>
            <person name="Fenille R.C."/>
            <person name="Ferro J.A."/>
            <person name="Formighieri E.F."/>
            <person name="Kishi L.T."/>
            <person name="Leoni S.G."/>
            <person name="Oliveira A.R."/>
            <person name="Rosa V.E. Jr."/>
            <person name="Sassaki F.T."/>
            <person name="Sena J.A.D."/>
            <person name="de Souza A.A."/>
            <person name="Truffi D."/>
            <person name="Tsukumo F."/>
            <person name="Yanai G.M."/>
            <person name="Zaros L.G."/>
            <person name="Civerolo E.L."/>
            <person name="Simpson A.J.G."/>
            <person name="Almeida N.F. Jr."/>
            <person name="Setubal J.C."/>
            <person name="Kitajima J.P."/>
        </authorList>
    </citation>
    <scope>NUCLEOTIDE SEQUENCE [LARGE SCALE GENOMIC DNA]</scope>
    <source>
        <strain>Temecula1 / ATCC 700964</strain>
    </source>
</reference>
<evidence type="ECO:0000255" key="1">
    <source>
        <dbReference type="HAMAP-Rule" id="MF_00182"/>
    </source>
</evidence>
<gene>
    <name evidence="1" type="primary">fmt</name>
    <name type="ordered locus">PD_1762</name>
</gene>
<sequence>MRIVFAGTPDFAVPSLRSVTQRADVVAVYTQPDRPAGRGRELMPSPVKLEAVARGLPVYQPQTLRSPEVLEQLRALRPDLIVVVAYGVILPEAVLTIPDDGCWNVHASLLPRWRGAAPIQRAIEAGDTETGVCLMQMEAGLDTGPVLMSLKTPINAHETSGQLHDRLAEMGAQLLSDGLGLLRAGLRPVPQPQLAVGVTYAHKLGKVESRLDWEQPAERLACRVRAFQPWPVAEVVLSGERVRIHEALALDLDHSQPPGTVLAASKEGIDVACVQGALRLCRLQREGGKAITVADYLNARRDLQVRA</sequence>
<name>FMT_XYLFT</name>
<dbReference type="EC" id="2.1.2.9" evidence="1"/>
<dbReference type="EMBL" id="AE009442">
    <property type="protein sequence ID" value="AAO29596.1"/>
    <property type="molecule type" value="Genomic_DNA"/>
</dbReference>
<dbReference type="RefSeq" id="WP_004089641.1">
    <property type="nucleotide sequence ID" value="NC_004556.1"/>
</dbReference>
<dbReference type="SMR" id="Q87AR0"/>
<dbReference type="GeneID" id="93905609"/>
<dbReference type="KEGG" id="xft:PD_1762"/>
<dbReference type="HOGENOM" id="CLU_033347_1_2_6"/>
<dbReference type="Proteomes" id="UP000002516">
    <property type="component" value="Chromosome"/>
</dbReference>
<dbReference type="GO" id="GO:0005829">
    <property type="term" value="C:cytosol"/>
    <property type="evidence" value="ECO:0007669"/>
    <property type="project" value="TreeGrafter"/>
</dbReference>
<dbReference type="GO" id="GO:0004479">
    <property type="term" value="F:methionyl-tRNA formyltransferase activity"/>
    <property type="evidence" value="ECO:0007669"/>
    <property type="project" value="UniProtKB-UniRule"/>
</dbReference>
<dbReference type="CDD" id="cd08646">
    <property type="entry name" value="FMT_core_Met-tRNA-FMT_N"/>
    <property type="match status" value="1"/>
</dbReference>
<dbReference type="CDD" id="cd08704">
    <property type="entry name" value="Met_tRNA_FMT_C"/>
    <property type="match status" value="1"/>
</dbReference>
<dbReference type="Gene3D" id="3.10.25.10">
    <property type="entry name" value="Formyl transferase, C-terminal domain"/>
    <property type="match status" value="1"/>
</dbReference>
<dbReference type="Gene3D" id="3.40.50.170">
    <property type="entry name" value="Formyl transferase, N-terminal domain"/>
    <property type="match status" value="1"/>
</dbReference>
<dbReference type="HAMAP" id="MF_00182">
    <property type="entry name" value="Formyl_trans"/>
    <property type="match status" value="1"/>
</dbReference>
<dbReference type="InterPro" id="IPR005794">
    <property type="entry name" value="Fmt"/>
</dbReference>
<dbReference type="InterPro" id="IPR005793">
    <property type="entry name" value="Formyl_trans_C"/>
</dbReference>
<dbReference type="InterPro" id="IPR037022">
    <property type="entry name" value="Formyl_trans_C_sf"/>
</dbReference>
<dbReference type="InterPro" id="IPR002376">
    <property type="entry name" value="Formyl_transf_N"/>
</dbReference>
<dbReference type="InterPro" id="IPR036477">
    <property type="entry name" value="Formyl_transf_N_sf"/>
</dbReference>
<dbReference type="InterPro" id="IPR011034">
    <property type="entry name" value="Formyl_transferase-like_C_sf"/>
</dbReference>
<dbReference type="InterPro" id="IPR001555">
    <property type="entry name" value="GART_AS"/>
</dbReference>
<dbReference type="InterPro" id="IPR044135">
    <property type="entry name" value="Met-tRNA-FMT_C"/>
</dbReference>
<dbReference type="InterPro" id="IPR041711">
    <property type="entry name" value="Met-tRNA-FMT_N"/>
</dbReference>
<dbReference type="NCBIfam" id="TIGR00460">
    <property type="entry name" value="fmt"/>
    <property type="match status" value="1"/>
</dbReference>
<dbReference type="PANTHER" id="PTHR11138">
    <property type="entry name" value="METHIONYL-TRNA FORMYLTRANSFERASE"/>
    <property type="match status" value="1"/>
</dbReference>
<dbReference type="PANTHER" id="PTHR11138:SF5">
    <property type="entry name" value="METHIONYL-TRNA FORMYLTRANSFERASE, MITOCHONDRIAL"/>
    <property type="match status" value="1"/>
</dbReference>
<dbReference type="Pfam" id="PF02911">
    <property type="entry name" value="Formyl_trans_C"/>
    <property type="match status" value="1"/>
</dbReference>
<dbReference type="Pfam" id="PF00551">
    <property type="entry name" value="Formyl_trans_N"/>
    <property type="match status" value="1"/>
</dbReference>
<dbReference type="SUPFAM" id="SSF50486">
    <property type="entry name" value="FMT C-terminal domain-like"/>
    <property type="match status" value="1"/>
</dbReference>
<dbReference type="SUPFAM" id="SSF53328">
    <property type="entry name" value="Formyltransferase"/>
    <property type="match status" value="1"/>
</dbReference>
<dbReference type="PROSITE" id="PS00373">
    <property type="entry name" value="GART"/>
    <property type="match status" value="1"/>
</dbReference>
<protein>
    <recommendedName>
        <fullName evidence="1">Methionyl-tRNA formyltransferase</fullName>
        <ecNumber evidence="1">2.1.2.9</ecNumber>
    </recommendedName>
</protein>
<keyword id="KW-0648">Protein biosynthesis</keyword>
<keyword id="KW-1185">Reference proteome</keyword>
<keyword id="KW-0808">Transferase</keyword>